<feature type="chain" id="PRO_1000051303" description="Small ribosomal subunit protein uS9">
    <location>
        <begin position="1"/>
        <end position="155"/>
    </location>
</feature>
<gene>
    <name evidence="1" type="primary">rpsI</name>
    <name type="ordered locus">RHE_CH01570</name>
</gene>
<comment type="similarity">
    <text evidence="1">Belongs to the universal ribosomal protein uS9 family.</text>
</comment>
<dbReference type="EMBL" id="CP000133">
    <property type="protein sequence ID" value="ABC90372.1"/>
    <property type="molecule type" value="Genomic_DNA"/>
</dbReference>
<dbReference type="RefSeq" id="WP_011424897.1">
    <property type="nucleotide sequence ID" value="NC_007761.1"/>
</dbReference>
<dbReference type="SMR" id="Q2K9W4"/>
<dbReference type="KEGG" id="ret:RHE_CH01570"/>
<dbReference type="eggNOG" id="COG0103">
    <property type="taxonomic scope" value="Bacteria"/>
</dbReference>
<dbReference type="HOGENOM" id="CLU_046483_2_0_5"/>
<dbReference type="OrthoDB" id="9803965at2"/>
<dbReference type="Proteomes" id="UP000001936">
    <property type="component" value="Chromosome"/>
</dbReference>
<dbReference type="GO" id="GO:0022627">
    <property type="term" value="C:cytosolic small ribosomal subunit"/>
    <property type="evidence" value="ECO:0007669"/>
    <property type="project" value="TreeGrafter"/>
</dbReference>
<dbReference type="GO" id="GO:0003723">
    <property type="term" value="F:RNA binding"/>
    <property type="evidence" value="ECO:0007669"/>
    <property type="project" value="TreeGrafter"/>
</dbReference>
<dbReference type="GO" id="GO:0003735">
    <property type="term" value="F:structural constituent of ribosome"/>
    <property type="evidence" value="ECO:0007669"/>
    <property type="project" value="InterPro"/>
</dbReference>
<dbReference type="GO" id="GO:0006412">
    <property type="term" value="P:translation"/>
    <property type="evidence" value="ECO:0007669"/>
    <property type="project" value="UniProtKB-UniRule"/>
</dbReference>
<dbReference type="FunFam" id="3.30.230.10:FF:000001">
    <property type="entry name" value="30S ribosomal protein S9"/>
    <property type="match status" value="1"/>
</dbReference>
<dbReference type="Gene3D" id="3.30.230.10">
    <property type="match status" value="1"/>
</dbReference>
<dbReference type="HAMAP" id="MF_00532_B">
    <property type="entry name" value="Ribosomal_uS9_B"/>
    <property type="match status" value="1"/>
</dbReference>
<dbReference type="InterPro" id="IPR020568">
    <property type="entry name" value="Ribosomal_Su5_D2-typ_SF"/>
</dbReference>
<dbReference type="InterPro" id="IPR000754">
    <property type="entry name" value="Ribosomal_uS9"/>
</dbReference>
<dbReference type="InterPro" id="IPR023035">
    <property type="entry name" value="Ribosomal_uS9_bac/plastid"/>
</dbReference>
<dbReference type="InterPro" id="IPR020574">
    <property type="entry name" value="Ribosomal_uS9_CS"/>
</dbReference>
<dbReference type="InterPro" id="IPR014721">
    <property type="entry name" value="Ribsml_uS5_D2-typ_fold_subgr"/>
</dbReference>
<dbReference type="NCBIfam" id="NF001099">
    <property type="entry name" value="PRK00132.1"/>
    <property type="match status" value="1"/>
</dbReference>
<dbReference type="PANTHER" id="PTHR21569">
    <property type="entry name" value="RIBOSOMAL PROTEIN S9"/>
    <property type="match status" value="1"/>
</dbReference>
<dbReference type="PANTHER" id="PTHR21569:SF1">
    <property type="entry name" value="SMALL RIBOSOMAL SUBUNIT PROTEIN US9M"/>
    <property type="match status" value="1"/>
</dbReference>
<dbReference type="Pfam" id="PF00380">
    <property type="entry name" value="Ribosomal_S9"/>
    <property type="match status" value="1"/>
</dbReference>
<dbReference type="SUPFAM" id="SSF54211">
    <property type="entry name" value="Ribosomal protein S5 domain 2-like"/>
    <property type="match status" value="1"/>
</dbReference>
<dbReference type="PROSITE" id="PS00360">
    <property type="entry name" value="RIBOSOMAL_S9"/>
    <property type="match status" value="1"/>
</dbReference>
<reference key="1">
    <citation type="journal article" date="2006" name="Proc. Natl. Acad. Sci. U.S.A.">
        <title>The partitioned Rhizobium etli genome: genetic and metabolic redundancy in seven interacting replicons.</title>
        <authorList>
            <person name="Gonzalez V."/>
            <person name="Santamaria R.I."/>
            <person name="Bustos P."/>
            <person name="Hernandez-Gonzalez I."/>
            <person name="Medrano-Soto A."/>
            <person name="Moreno-Hagelsieb G."/>
            <person name="Janga S.C."/>
            <person name="Ramirez M.A."/>
            <person name="Jimenez-Jacinto V."/>
            <person name="Collado-Vides J."/>
            <person name="Davila G."/>
        </authorList>
    </citation>
    <scope>NUCLEOTIDE SEQUENCE [LARGE SCALE GENOMIC DNA]</scope>
    <source>
        <strain>ATCC 51251 / DSM 11541 / JCM 21823 / NBRC 15573 / CFN 42</strain>
    </source>
</reference>
<accession>Q2K9W4</accession>
<name>RS9_RHIEC</name>
<proteinExistence type="inferred from homology"/>
<organism>
    <name type="scientific">Rhizobium etli (strain ATCC 51251 / DSM 11541 / JCM 21823 / NBRC 15573 / CFN 42)</name>
    <dbReference type="NCBI Taxonomy" id="347834"/>
    <lineage>
        <taxon>Bacteria</taxon>
        <taxon>Pseudomonadati</taxon>
        <taxon>Pseudomonadota</taxon>
        <taxon>Alphaproteobacteria</taxon>
        <taxon>Hyphomicrobiales</taxon>
        <taxon>Rhizobiaceae</taxon>
        <taxon>Rhizobium/Agrobacterium group</taxon>
        <taxon>Rhizobium</taxon>
    </lineage>
</organism>
<keyword id="KW-1185">Reference proteome</keyword>
<keyword id="KW-0687">Ribonucleoprotein</keyword>
<keyword id="KW-0689">Ribosomal protein</keyword>
<protein>
    <recommendedName>
        <fullName evidence="1">Small ribosomal subunit protein uS9</fullName>
    </recommendedName>
    <alternativeName>
        <fullName evidence="2">30S ribosomal protein S9</fullName>
    </alternativeName>
</protein>
<sequence>MADLSSLKDLGTSSEAAAPAHVRKVDSLGRSYATGKRKDAVARVWVKAGSGKIIVNGKDFTAYFARPVLQMILRQPIVAAARDGQFDIIATVAGGGLSGQAGAVRHGLSKALTYFEPGLRSVLKKGGFLTRDSRVVERKKYGKAKARRSFQFSKR</sequence>
<evidence type="ECO:0000255" key="1">
    <source>
        <dbReference type="HAMAP-Rule" id="MF_00532"/>
    </source>
</evidence>
<evidence type="ECO:0000305" key="2"/>